<feature type="chain" id="PRO_1000197623" description="SsrA-binding protein">
    <location>
        <begin position="1"/>
        <end position="163"/>
    </location>
</feature>
<keyword id="KW-0963">Cytoplasm</keyword>
<keyword id="KW-0694">RNA-binding</keyword>
<protein>
    <recommendedName>
        <fullName evidence="1">SsrA-binding protein</fullName>
    </recommendedName>
    <alternativeName>
        <fullName evidence="1">Small protein B</fullName>
    </alternativeName>
</protein>
<accession>B8EAZ5</accession>
<gene>
    <name evidence="1" type="primary">smpB</name>
    <name type="ordered locus">Sbal223_3052</name>
</gene>
<name>SSRP_SHEB2</name>
<dbReference type="EMBL" id="CP001252">
    <property type="protein sequence ID" value="ACK47537.1"/>
    <property type="molecule type" value="Genomic_DNA"/>
</dbReference>
<dbReference type="RefSeq" id="WP_006080832.1">
    <property type="nucleotide sequence ID" value="NC_011663.1"/>
</dbReference>
<dbReference type="SMR" id="B8EAZ5"/>
<dbReference type="GeneID" id="11771594"/>
<dbReference type="KEGG" id="sbp:Sbal223_3052"/>
<dbReference type="HOGENOM" id="CLU_108953_3_0_6"/>
<dbReference type="Proteomes" id="UP000002507">
    <property type="component" value="Chromosome"/>
</dbReference>
<dbReference type="GO" id="GO:0005829">
    <property type="term" value="C:cytosol"/>
    <property type="evidence" value="ECO:0007669"/>
    <property type="project" value="TreeGrafter"/>
</dbReference>
<dbReference type="GO" id="GO:0003723">
    <property type="term" value="F:RNA binding"/>
    <property type="evidence" value="ECO:0007669"/>
    <property type="project" value="UniProtKB-UniRule"/>
</dbReference>
<dbReference type="GO" id="GO:0070929">
    <property type="term" value="P:trans-translation"/>
    <property type="evidence" value="ECO:0007669"/>
    <property type="project" value="UniProtKB-UniRule"/>
</dbReference>
<dbReference type="CDD" id="cd09294">
    <property type="entry name" value="SmpB"/>
    <property type="match status" value="1"/>
</dbReference>
<dbReference type="Gene3D" id="2.40.280.10">
    <property type="match status" value="1"/>
</dbReference>
<dbReference type="HAMAP" id="MF_00023">
    <property type="entry name" value="SmpB"/>
    <property type="match status" value="1"/>
</dbReference>
<dbReference type="InterPro" id="IPR023620">
    <property type="entry name" value="SmpB"/>
</dbReference>
<dbReference type="InterPro" id="IPR000037">
    <property type="entry name" value="SsrA-bd_prot"/>
</dbReference>
<dbReference type="InterPro" id="IPR020081">
    <property type="entry name" value="SsrA-bd_prot_CS"/>
</dbReference>
<dbReference type="NCBIfam" id="NF003843">
    <property type="entry name" value="PRK05422.1"/>
    <property type="match status" value="1"/>
</dbReference>
<dbReference type="NCBIfam" id="TIGR00086">
    <property type="entry name" value="smpB"/>
    <property type="match status" value="1"/>
</dbReference>
<dbReference type="PANTHER" id="PTHR30308:SF2">
    <property type="entry name" value="SSRA-BINDING PROTEIN"/>
    <property type="match status" value="1"/>
</dbReference>
<dbReference type="PANTHER" id="PTHR30308">
    <property type="entry name" value="TMRNA-BINDING COMPONENT OF TRANS-TRANSLATION TAGGING COMPLEX"/>
    <property type="match status" value="1"/>
</dbReference>
<dbReference type="Pfam" id="PF01668">
    <property type="entry name" value="SmpB"/>
    <property type="match status" value="1"/>
</dbReference>
<dbReference type="SUPFAM" id="SSF74982">
    <property type="entry name" value="Small protein B (SmpB)"/>
    <property type="match status" value="1"/>
</dbReference>
<dbReference type="PROSITE" id="PS01317">
    <property type="entry name" value="SSRP"/>
    <property type="match status" value="1"/>
</dbReference>
<sequence length="163" mass="18641">MVKKNSSKAAPATIARNKRATFEYRFEEKMEAGLSLMGWEVKSIRMGKVNLSDCYVFLKNGEAFMHGCTIIPLNTASTHVVCDPLRLKKLLLSRKELDKLAGLVERQGYSIIPISMYWRKGAWVKVEIGLGKGKKDHDKREDTKAREWEVEKARVMKKEKTHG</sequence>
<comment type="function">
    <text evidence="1">Required for rescue of stalled ribosomes mediated by trans-translation. Binds to transfer-messenger RNA (tmRNA), required for stable association of tmRNA with ribosomes. tmRNA and SmpB together mimic tRNA shape, replacing the anticodon stem-loop with SmpB. tmRNA is encoded by the ssrA gene; the 2 termini fold to resemble tRNA(Ala) and it encodes a 'tag peptide', a short internal open reading frame. During trans-translation Ala-aminoacylated tmRNA acts like a tRNA, entering the A-site of stalled ribosomes, displacing the stalled mRNA. The ribosome then switches to translate the ORF on the tmRNA; the nascent peptide is terminated with the 'tag peptide' encoded by the tmRNA and targeted for degradation. The ribosome is freed to recommence translation, which seems to be the essential function of trans-translation.</text>
</comment>
<comment type="subcellular location">
    <subcellularLocation>
        <location evidence="1">Cytoplasm</location>
    </subcellularLocation>
    <text evidence="1">The tmRNA-SmpB complex associates with stalled 70S ribosomes.</text>
</comment>
<comment type="similarity">
    <text evidence="1">Belongs to the SmpB family.</text>
</comment>
<organism>
    <name type="scientific">Shewanella baltica (strain OS223)</name>
    <dbReference type="NCBI Taxonomy" id="407976"/>
    <lineage>
        <taxon>Bacteria</taxon>
        <taxon>Pseudomonadati</taxon>
        <taxon>Pseudomonadota</taxon>
        <taxon>Gammaproteobacteria</taxon>
        <taxon>Alteromonadales</taxon>
        <taxon>Shewanellaceae</taxon>
        <taxon>Shewanella</taxon>
    </lineage>
</organism>
<proteinExistence type="inferred from homology"/>
<evidence type="ECO:0000255" key="1">
    <source>
        <dbReference type="HAMAP-Rule" id="MF_00023"/>
    </source>
</evidence>
<reference key="1">
    <citation type="submission" date="2008-12" db="EMBL/GenBank/DDBJ databases">
        <title>Complete sequence of chromosome of Shewanella baltica OS223.</title>
        <authorList>
            <consortium name="US DOE Joint Genome Institute"/>
            <person name="Lucas S."/>
            <person name="Copeland A."/>
            <person name="Lapidus A."/>
            <person name="Glavina del Rio T."/>
            <person name="Dalin E."/>
            <person name="Tice H."/>
            <person name="Bruce D."/>
            <person name="Goodwin L."/>
            <person name="Pitluck S."/>
            <person name="Chertkov O."/>
            <person name="Meincke L."/>
            <person name="Brettin T."/>
            <person name="Detter J.C."/>
            <person name="Han C."/>
            <person name="Kuske C.R."/>
            <person name="Larimer F."/>
            <person name="Land M."/>
            <person name="Hauser L."/>
            <person name="Kyrpides N."/>
            <person name="Ovchinnikova G."/>
            <person name="Brettar I."/>
            <person name="Rodrigues J."/>
            <person name="Konstantinidis K."/>
            <person name="Tiedje J."/>
        </authorList>
    </citation>
    <scope>NUCLEOTIDE SEQUENCE [LARGE SCALE GENOMIC DNA]</scope>
    <source>
        <strain>OS223</strain>
    </source>
</reference>